<proteinExistence type="inferred from homology"/>
<gene>
    <name type="ORF">ECAG_02205</name>
</gene>
<comment type="function">
    <text evidence="2">Has no detectable activity with D-mannonate and with a panel of 70 other acid sugars (in vitro), in spite of the conservation of the residues that are expected to be important for catalytic activity and cofactor binding. May have evolved a divergent function.</text>
</comment>
<comment type="similarity">
    <text evidence="3">Belongs to the mandelate racemase/muconate lactonizing enzyme family. GalD subfamily.</text>
</comment>
<dbReference type="EMBL" id="GG692817">
    <property type="protein sequence ID" value="EEV36644.1"/>
    <property type="molecule type" value="Genomic_DNA"/>
</dbReference>
<dbReference type="RefSeq" id="WP_005228495.1">
    <property type="nucleotide sequence ID" value="NZ_GG692817.1"/>
</dbReference>
<dbReference type="SMR" id="C9CN91"/>
<dbReference type="HOGENOM" id="CLU_030273_6_1_9"/>
<dbReference type="GO" id="GO:0000287">
    <property type="term" value="F:magnesium ion binding"/>
    <property type="evidence" value="ECO:0000250"/>
    <property type="project" value="UniProtKB"/>
</dbReference>
<dbReference type="GO" id="GO:0009063">
    <property type="term" value="P:amino acid catabolic process"/>
    <property type="evidence" value="ECO:0007669"/>
    <property type="project" value="InterPro"/>
</dbReference>
<dbReference type="FunFam" id="3.20.20.120:FF:000011">
    <property type="entry name" value="D-galactonate dehydratase family member VSWAT3_13707"/>
    <property type="match status" value="1"/>
</dbReference>
<dbReference type="Gene3D" id="3.20.20.120">
    <property type="entry name" value="Enolase-like C-terminal domain"/>
    <property type="match status" value="1"/>
</dbReference>
<dbReference type="Gene3D" id="3.30.390.10">
    <property type="entry name" value="Enolase-like, N-terminal domain"/>
    <property type="match status" value="1"/>
</dbReference>
<dbReference type="InterPro" id="IPR034593">
    <property type="entry name" value="DgoD-like"/>
</dbReference>
<dbReference type="InterPro" id="IPR036849">
    <property type="entry name" value="Enolase-like_C_sf"/>
</dbReference>
<dbReference type="InterPro" id="IPR029017">
    <property type="entry name" value="Enolase-like_N"/>
</dbReference>
<dbReference type="InterPro" id="IPR029065">
    <property type="entry name" value="Enolase_C-like"/>
</dbReference>
<dbReference type="InterPro" id="IPR018110">
    <property type="entry name" value="Mandel_Rmase/mucon_lact_enz_CS"/>
</dbReference>
<dbReference type="InterPro" id="IPR013342">
    <property type="entry name" value="Mandelate_racemase_C"/>
</dbReference>
<dbReference type="InterPro" id="IPR013341">
    <property type="entry name" value="Mandelate_racemase_N_dom"/>
</dbReference>
<dbReference type="PANTHER" id="PTHR48080">
    <property type="entry name" value="D-GALACTONATE DEHYDRATASE-RELATED"/>
    <property type="match status" value="1"/>
</dbReference>
<dbReference type="PANTHER" id="PTHR48080:SF6">
    <property type="entry name" value="STARVATION-SENSING PROTEIN RSPA"/>
    <property type="match status" value="1"/>
</dbReference>
<dbReference type="Pfam" id="PF13378">
    <property type="entry name" value="MR_MLE_C"/>
    <property type="match status" value="1"/>
</dbReference>
<dbReference type="Pfam" id="PF02746">
    <property type="entry name" value="MR_MLE_N"/>
    <property type="match status" value="1"/>
</dbReference>
<dbReference type="SMART" id="SM00922">
    <property type="entry name" value="MR_MLE"/>
    <property type="match status" value="1"/>
</dbReference>
<dbReference type="SUPFAM" id="SSF51604">
    <property type="entry name" value="Enolase C-terminal domain-like"/>
    <property type="match status" value="1"/>
</dbReference>
<dbReference type="SUPFAM" id="SSF54826">
    <property type="entry name" value="Enolase N-terminal domain-like"/>
    <property type="match status" value="1"/>
</dbReference>
<dbReference type="PROSITE" id="PS00908">
    <property type="entry name" value="MR_MLE_1"/>
    <property type="match status" value="1"/>
</dbReference>
<keyword id="KW-0460">Magnesium</keyword>
<keyword id="KW-0479">Metal-binding</keyword>
<name>IMAND_ENTCS</name>
<organism>
    <name type="scientific">Enterococcus casseliflavus (strain EC10)</name>
    <dbReference type="NCBI Taxonomy" id="565654"/>
    <lineage>
        <taxon>Bacteria</taxon>
        <taxon>Bacillati</taxon>
        <taxon>Bacillota</taxon>
        <taxon>Bacilli</taxon>
        <taxon>Lactobacillales</taxon>
        <taxon>Enterococcaceae</taxon>
        <taxon>Enterococcus</taxon>
    </lineage>
</organism>
<sequence>MTPTIITDVKAFAIKPDRHNLVVVKVETNKGVSGLGCATFQFRPLAVKTVVDEYLRPLLLGRDANQIEDLWQVMNVNSYWRNGPITNNAISGVDMALWDIKGQLADMPLYQLLGGKARTAIPAYTHAVADNLEDLYQEIDRFLAEGYRYIRCQLGFYGGNPSQLQTPDQPIAGSYFDQTDYMDTTLKMFAAIQERYGNQFQMLHDVHERLHPNQAIQFAKAAEPFNLFFLEDILPPDQNKWLQQLRSQSATPIATGELFNNPMEWQELVKNQQIDFMRAHVSQIGGITPALKLAHFCDAMGIRIAWHTPSDISPVGLAVNNHLNIHLHNAAIQETIAIPANTQSVFGGSPQPENGYFYPIEKSGIGITFDEAAAAEFPVVYRPHEWTQSRTPDGTLITP</sequence>
<protein>
    <recommendedName>
        <fullName>D-galactonate dehydratase family member ECAG_02205</fullName>
    </recommendedName>
</protein>
<feature type="chain" id="PRO_0000429907" description="D-galactonate dehydratase family member ECAG_02205">
    <location>
        <begin position="1"/>
        <end position="399"/>
    </location>
</feature>
<feature type="binding site" evidence="1">
    <location>
        <position position="205"/>
    </location>
    <ligand>
        <name>Mg(2+)</name>
        <dbReference type="ChEBI" id="CHEBI:18420"/>
    </ligand>
</feature>
<feature type="binding site" evidence="1">
    <location>
        <position position="207"/>
    </location>
    <ligand>
        <name>D-arabinonate</name>
        <dbReference type="ChEBI" id="CHEBI:16157"/>
    </ligand>
</feature>
<feature type="binding site" evidence="1">
    <location>
        <position position="231"/>
    </location>
    <ligand>
        <name>Mg(2+)</name>
        <dbReference type="ChEBI" id="CHEBI:18420"/>
    </ligand>
</feature>
<feature type="binding site" evidence="1">
    <location>
        <position position="257"/>
    </location>
    <ligand>
        <name>D-arabinonate</name>
        <dbReference type="ChEBI" id="CHEBI:16157"/>
    </ligand>
</feature>
<feature type="binding site" evidence="1">
    <location>
        <position position="257"/>
    </location>
    <ligand>
        <name>Mg(2+)</name>
        <dbReference type="ChEBI" id="CHEBI:18420"/>
    </ligand>
</feature>
<feature type="binding site" evidence="1">
    <location>
        <position position="278"/>
    </location>
    <ligand>
        <name>D-arabinonate</name>
        <dbReference type="ChEBI" id="CHEBI:16157"/>
    </ligand>
</feature>
<feature type="binding site" evidence="1">
    <location>
        <position position="307"/>
    </location>
    <ligand>
        <name>D-arabinonate</name>
        <dbReference type="ChEBI" id="CHEBI:16157"/>
    </ligand>
</feature>
<feature type="binding site" evidence="1">
    <location>
        <position position="334"/>
    </location>
    <ligand>
        <name>D-arabinonate</name>
        <dbReference type="ChEBI" id="CHEBI:16157"/>
    </ligand>
</feature>
<accession>C9CN91</accession>
<reference key="1">
    <citation type="submission" date="2009-02" db="EMBL/GenBank/DDBJ databases">
        <title>The genome sequence of Enterococcus casseliflavus strain EC10 (892361).</title>
        <authorList>
            <consortium name="The Broad Institute Genome Sequencing Platform"/>
            <person name="Feldgarden M."/>
            <person name="Young S.K."/>
            <person name="Kodira C.D."/>
            <person name="Zeng Q."/>
            <person name="Koehrsen M."/>
            <person name="Alvarado L."/>
            <person name="Berlin A."/>
            <person name="Borenstein D."/>
            <person name="Chen Z."/>
            <person name="Engels R."/>
            <person name="Freedman E."/>
            <person name="Gellesch M."/>
            <person name="Goldberg J."/>
            <person name="Griggs A."/>
            <person name="Gujja S."/>
            <person name="Heiman D."/>
            <person name="Hepburn T."/>
            <person name="Howarth C."/>
            <person name="Jen D."/>
            <person name="Larson L."/>
            <person name="Lewis B."/>
            <person name="Mehta T."/>
            <person name="Park D."/>
            <person name="Pearson M."/>
            <person name="Roberts A."/>
            <person name="Saif S."/>
            <person name="Shea T."/>
            <person name="Shenoy N."/>
            <person name="Sisk P."/>
            <person name="Stolte C."/>
            <person name="Sykes S."/>
            <person name="Walk T."/>
            <person name="White J."/>
            <person name="Yandava C."/>
            <person name="Gilmore M."/>
            <person name="Manson J."/>
            <person name="Palmer K."/>
            <person name="Carniol K."/>
            <person name="Lander E."/>
            <person name="Nusbaum C."/>
            <person name="Galagan J."/>
            <person name="Birren B."/>
        </authorList>
    </citation>
    <scope>NUCLEOTIDE SEQUENCE [LARGE SCALE GENOMIC DNA]</scope>
    <source>
        <strain>EC10</strain>
    </source>
</reference>
<reference key="2">
    <citation type="journal article" date="2014" name="Biochemistry">
        <title>Discovery of function in the enolase superfamily: D-mannonate and D-gluconate dehydratases in the D-mannonate dehydratase subgroup.</title>
        <authorList>
            <person name="Wichelecki D.J."/>
            <person name="Balthazor B.M."/>
            <person name="Chau A.C."/>
            <person name="Vetting M.W."/>
            <person name="Fedorov A.A."/>
            <person name="Fedorov E.V."/>
            <person name="Lukk T."/>
            <person name="Patskovsky Y.V."/>
            <person name="Stead M.B."/>
            <person name="Hillerich B.S."/>
            <person name="Seidel R.D."/>
            <person name="Almo S.C."/>
            <person name="Gerlt J.A."/>
        </authorList>
    </citation>
    <scope>FUNCTION</scope>
    <scope>LACK OF D-MANNONATE DEHYDRATASE ACTIVITY</scope>
    <source>
        <strain>EC10</strain>
    </source>
</reference>
<evidence type="ECO:0000250" key="1"/>
<evidence type="ECO:0000269" key="2">
    <source>
    </source>
</evidence>
<evidence type="ECO:0000305" key="3"/>